<evidence type="ECO:0000250" key="1"/>
<evidence type="ECO:0000255" key="2">
    <source>
        <dbReference type="PROSITE-ProRule" id="PRU00056"/>
    </source>
</evidence>
<evidence type="ECO:0000255" key="3">
    <source>
        <dbReference type="PROSITE-ProRule" id="PRU00062"/>
    </source>
</evidence>
<evidence type="ECO:0000255" key="4">
    <source>
        <dbReference type="PROSITE-ProRule" id="PRU00114"/>
    </source>
</evidence>
<evidence type="ECO:0000255" key="5">
    <source>
        <dbReference type="PROSITE-ProRule" id="PRU00145"/>
    </source>
</evidence>
<evidence type="ECO:0000255" key="6">
    <source>
        <dbReference type="PROSITE-ProRule" id="PRU00159"/>
    </source>
</evidence>
<evidence type="ECO:0000255" key="7">
    <source>
        <dbReference type="PROSITE-ProRule" id="PRU00192"/>
    </source>
</evidence>
<evidence type="ECO:0000255" key="8">
    <source>
        <dbReference type="PROSITE-ProRule" id="PRU10027"/>
    </source>
</evidence>
<evidence type="ECO:0000256" key="9">
    <source>
        <dbReference type="SAM" id="MobiDB-lite"/>
    </source>
</evidence>
<evidence type="ECO:0000305" key="10"/>
<accession>Q1LUA6</accession>
<proteinExistence type="inferred from homology"/>
<feature type="chain" id="PRO_0000278475" description="Triple functional domain protein">
    <location>
        <begin position="1"/>
        <end position="3028"/>
    </location>
</feature>
<feature type="domain" description="CRAL-TRIO" evidence="2">
    <location>
        <begin position="5"/>
        <end position="151"/>
    </location>
</feature>
<feature type="repeat" description="Spectrin 1">
    <location>
        <begin position="162"/>
        <end position="288"/>
    </location>
</feature>
<feature type="repeat" description="Spectrin 2">
    <location>
        <begin position="294"/>
        <end position="396"/>
    </location>
</feature>
<feature type="repeat" description="Spectrin 3">
    <location>
        <begin position="399"/>
        <end position="514"/>
    </location>
</feature>
<feature type="repeat" description="Spectrin 4">
    <location>
        <begin position="517"/>
        <end position="623"/>
    </location>
</feature>
<feature type="repeat" description="Spectrin 5">
    <location>
        <begin position="624"/>
        <end position="735"/>
    </location>
</feature>
<feature type="repeat" description="Spectrin 6">
    <location>
        <begin position="858"/>
        <end position="963"/>
    </location>
</feature>
<feature type="repeat" description="Spectrin 7">
    <location>
        <begin position="1089"/>
        <end position="1195"/>
    </location>
</feature>
<feature type="domain" description="DH 1" evidence="3">
    <location>
        <begin position="1243"/>
        <end position="1418"/>
    </location>
</feature>
<feature type="domain" description="PH 1" evidence="5">
    <location>
        <begin position="1430"/>
        <end position="1542"/>
    </location>
</feature>
<feature type="domain" description="SH3 1" evidence="7">
    <location>
        <begin position="1606"/>
        <end position="1671"/>
    </location>
</feature>
<feature type="domain" description="DH 2" evidence="3">
    <location>
        <begin position="1920"/>
        <end position="2096"/>
    </location>
</feature>
<feature type="domain" description="PH 2" evidence="5">
    <location>
        <begin position="2108"/>
        <end position="2223"/>
    </location>
</feature>
<feature type="domain" description="SH3 2" evidence="7">
    <location>
        <begin position="2480"/>
        <end position="2545"/>
    </location>
</feature>
<feature type="domain" description="Ig-like C2-type">
    <location>
        <begin position="2615"/>
        <end position="2705"/>
    </location>
</feature>
<feature type="domain" description="Protein kinase" evidence="6">
    <location>
        <begin position="2726"/>
        <end position="2980"/>
    </location>
</feature>
<feature type="region of interest" description="Disordered" evidence="9">
    <location>
        <begin position="227"/>
        <end position="256"/>
    </location>
</feature>
<feature type="region of interest" description="Disordered" evidence="9">
    <location>
        <begin position="1557"/>
        <end position="1601"/>
    </location>
</feature>
<feature type="region of interest" description="Disordered" evidence="9">
    <location>
        <begin position="1698"/>
        <end position="1822"/>
    </location>
</feature>
<feature type="region of interest" description="Disordered" evidence="9">
    <location>
        <begin position="1834"/>
        <end position="1858"/>
    </location>
</feature>
<feature type="region of interest" description="Disordered" evidence="9">
    <location>
        <begin position="1876"/>
        <end position="1906"/>
    </location>
</feature>
<feature type="region of interest" description="Disordered" evidence="9">
    <location>
        <begin position="2242"/>
        <end position="2368"/>
    </location>
</feature>
<feature type="region of interest" description="Disordered" evidence="9">
    <location>
        <begin position="2391"/>
        <end position="2481"/>
    </location>
</feature>
<feature type="region of interest" description="Disordered" evidence="9">
    <location>
        <begin position="2566"/>
        <end position="2589"/>
    </location>
</feature>
<feature type="compositionally biased region" description="Polar residues" evidence="9">
    <location>
        <begin position="1579"/>
        <end position="1599"/>
    </location>
</feature>
<feature type="compositionally biased region" description="Basic residues" evidence="9">
    <location>
        <begin position="1745"/>
        <end position="1756"/>
    </location>
</feature>
<feature type="compositionally biased region" description="Basic and acidic residues" evidence="9">
    <location>
        <begin position="1757"/>
        <end position="1770"/>
    </location>
</feature>
<feature type="compositionally biased region" description="Low complexity" evidence="9">
    <location>
        <begin position="1788"/>
        <end position="1806"/>
    </location>
</feature>
<feature type="compositionally biased region" description="Low complexity" evidence="9">
    <location>
        <begin position="1843"/>
        <end position="1852"/>
    </location>
</feature>
<feature type="compositionally biased region" description="Low complexity" evidence="9">
    <location>
        <begin position="1887"/>
        <end position="1905"/>
    </location>
</feature>
<feature type="compositionally biased region" description="Gly residues" evidence="9">
    <location>
        <begin position="2247"/>
        <end position="2273"/>
    </location>
</feature>
<feature type="compositionally biased region" description="Low complexity" evidence="9">
    <location>
        <begin position="2274"/>
        <end position="2293"/>
    </location>
</feature>
<feature type="compositionally biased region" description="Low complexity" evidence="9">
    <location>
        <begin position="2315"/>
        <end position="2329"/>
    </location>
</feature>
<feature type="compositionally biased region" description="Low complexity" evidence="9">
    <location>
        <begin position="2406"/>
        <end position="2423"/>
    </location>
</feature>
<feature type="compositionally biased region" description="Polar residues" evidence="9">
    <location>
        <begin position="2435"/>
        <end position="2444"/>
    </location>
</feature>
<feature type="compositionally biased region" description="Low complexity" evidence="9">
    <location>
        <begin position="2456"/>
        <end position="2481"/>
    </location>
</feature>
<feature type="compositionally biased region" description="Basic and acidic residues" evidence="9">
    <location>
        <begin position="2573"/>
        <end position="2589"/>
    </location>
</feature>
<feature type="active site" description="Proton acceptor" evidence="6 8">
    <location>
        <position position="2845"/>
    </location>
</feature>
<feature type="binding site" evidence="6">
    <location>
        <begin position="2732"/>
        <end position="2740"/>
    </location>
    <ligand>
        <name>ATP</name>
        <dbReference type="ChEBI" id="CHEBI:30616"/>
    </ligand>
</feature>
<feature type="binding site" evidence="6">
    <location>
        <position position="2755"/>
    </location>
    <ligand>
        <name>ATP</name>
        <dbReference type="ChEBI" id="CHEBI:30616"/>
    </ligand>
</feature>
<feature type="disulfide bond" evidence="4">
    <location>
        <begin position="2636"/>
        <end position="2689"/>
    </location>
</feature>
<dbReference type="EC" id="2.7.11.1"/>
<dbReference type="EMBL" id="BX957244">
    <property type="protein sequence ID" value="CAK04109.1"/>
    <property type="molecule type" value="Genomic_DNA"/>
</dbReference>
<dbReference type="EMBL" id="BX950864">
    <property type="protein sequence ID" value="CAK04109.1"/>
    <property type="status" value="JOINED"/>
    <property type="molecule type" value="Genomic_DNA"/>
</dbReference>
<dbReference type="EMBL" id="BX950864">
    <property type="protein sequence ID" value="CAK05186.1"/>
    <property type="molecule type" value="Genomic_DNA"/>
</dbReference>
<dbReference type="EMBL" id="BX957244">
    <property type="protein sequence ID" value="CAK05186.1"/>
    <property type="status" value="JOINED"/>
    <property type="molecule type" value="Genomic_DNA"/>
</dbReference>
<dbReference type="SMR" id="Q1LUA6"/>
<dbReference type="FunCoup" id="Q1LUA6">
    <property type="interactions" value="1653"/>
</dbReference>
<dbReference type="STRING" id="7955.ENSDARP00000081489"/>
<dbReference type="PaxDb" id="7955-ENSDARP00000081489"/>
<dbReference type="AGR" id="ZFIN:ZDB-GENE-060503-334"/>
<dbReference type="ZFIN" id="ZDB-GENE-060503-334">
    <property type="gene designation" value="trioa"/>
</dbReference>
<dbReference type="eggNOG" id="KOG0032">
    <property type="taxonomic scope" value="Eukaryota"/>
</dbReference>
<dbReference type="eggNOG" id="KOG4240">
    <property type="taxonomic scope" value="Eukaryota"/>
</dbReference>
<dbReference type="InParanoid" id="Q1LUA6"/>
<dbReference type="OrthoDB" id="10256089at2759"/>
<dbReference type="PhylomeDB" id="Q1LUA6"/>
<dbReference type="Reactome" id="R-DRE-193648">
    <property type="pathway name" value="NRAGE signals death through JNK"/>
</dbReference>
<dbReference type="Reactome" id="R-DRE-416476">
    <property type="pathway name" value="G alpha (q) signalling events"/>
</dbReference>
<dbReference type="Reactome" id="R-DRE-416482">
    <property type="pathway name" value="G alpha (12/13) signalling events"/>
</dbReference>
<dbReference type="Reactome" id="R-DRE-418885">
    <property type="pathway name" value="DCC mediated attractive signaling"/>
</dbReference>
<dbReference type="Reactome" id="R-DRE-8980692">
    <property type="pathway name" value="RHOA GTPase cycle"/>
</dbReference>
<dbReference type="Reactome" id="R-DRE-9013148">
    <property type="pathway name" value="CDC42 GTPase cycle"/>
</dbReference>
<dbReference type="Reactome" id="R-DRE-9013149">
    <property type="pathway name" value="RAC1 GTPase cycle"/>
</dbReference>
<dbReference type="Reactome" id="R-DRE-9013404">
    <property type="pathway name" value="RAC2 GTPase cycle"/>
</dbReference>
<dbReference type="Reactome" id="R-DRE-9013408">
    <property type="pathway name" value="RHOG GTPase cycle"/>
</dbReference>
<dbReference type="Reactome" id="R-DRE-9013423">
    <property type="pathway name" value="RAC3 GTPase cycle"/>
</dbReference>
<dbReference type="PRO" id="PR:Q1LUA6"/>
<dbReference type="Proteomes" id="UP000000437">
    <property type="component" value="Unplaced"/>
</dbReference>
<dbReference type="GO" id="GO:0005737">
    <property type="term" value="C:cytoplasm"/>
    <property type="evidence" value="ECO:0000318"/>
    <property type="project" value="GO_Central"/>
</dbReference>
<dbReference type="GO" id="GO:0019898">
    <property type="term" value="C:extrinsic component of membrane"/>
    <property type="evidence" value="ECO:0000318"/>
    <property type="project" value="GO_Central"/>
</dbReference>
<dbReference type="GO" id="GO:0005524">
    <property type="term" value="F:ATP binding"/>
    <property type="evidence" value="ECO:0007669"/>
    <property type="project" value="UniProtKB-KW"/>
</dbReference>
<dbReference type="GO" id="GO:0005085">
    <property type="term" value="F:guanyl-nucleotide exchange factor activity"/>
    <property type="evidence" value="ECO:0000318"/>
    <property type="project" value="GO_Central"/>
</dbReference>
<dbReference type="GO" id="GO:0106310">
    <property type="term" value="F:protein serine kinase activity"/>
    <property type="evidence" value="ECO:0007669"/>
    <property type="project" value="RHEA"/>
</dbReference>
<dbReference type="GO" id="GO:0004674">
    <property type="term" value="F:protein serine/threonine kinase activity"/>
    <property type="evidence" value="ECO:0007669"/>
    <property type="project" value="UniProtKB-KW"/>
</dbReference>
<dbReference type="GO" id="GO:0007411">
    <property type="term" value="P:axon guidance"/>
    <property type="evidence" value="ECO:0000318"/>
    <property type="project" value="GO_Central"/>
</dbReference>
<dbReference type="CDD" id="cd13240">
    <property type="entry name" value="PH1_Kalirin_Trio_like"/>
    <property type="match status" value="1"/>
</dbReference>
<dbReference type="CDD" id="cd13241">
    <property type="entry name" value="PH2_Kalirin_Trio_p63RhoGEF"/>
    <property type="match status" value="1"/>
</dbReference>
<dbReference type="CDD" id="cd00160">
    <property type="entry name" value="RhoGEF"/>
    <property type="match status" value="2"/>
</dbReference>
<dbReference type="CDD" id="cd00170">
    <property type="entry name" value="SEC14"/>
    <property type="match status" value="1"/>
</dbReference>
<dbReference type="CDD" id="cd11852">
    <property type="entry name" value="SH3_Kalirin_1"/>
    <property type="match status" value="1"/>
</dbReference>
<dbReference type="CDD" id="cd11853">
    <property type="entry name" value="SH3_Kalirin_2"/>
    <property type="match status" value="1"/>
</dbReference>
<dbReference type="CDD" id="cd00176">
    <property type="entry name" value="SPEC"/>
    <property type="match status" value="6"/>
</dbReference>
<dbReference type="FunFam" id="1.20.900.10:FF:000001">
    <property type="entry name" value="Guanine nucleotide exchange factor DBS"/>
    <property type="match status" value="1"/>
</dbReference>
<dbReference type="FunFam" id="1.10.510.10:FF:000152">
    <property type="entry name" value="kalirin isoform X1"/>
    <property type="match status" value="1"/>
</dbReference>
<dbReference type="FunFam" id="2.30.30.40:FF:000038">
    <property type="entry name" value="kalirin isoform X1"/>
    <property type="match status" value="1"/>
</dbReference>
<dbReference type="FunFam" id="2.30.30.40:FF:000040">
    <property type="entry name" value="kalirin isoform X1"/>
    <property type="match status" value="1"/>
</dbReference>
<dbReference type="FunFam" id="2.60.40.10:FF:000368">
    <property type="entry name" value="kalirin isoform X1"/>
    <property type="match status" value="1"/>
</dbReference>
<dbReference type="FunFam" id="1.20.58.60:FF:000034">
    <property type="entry name" value="kalirin isoform X2"/>
    <property type="match status" value="1"/>
</dbReference>
<dbReference type="FunFam" id="3.40.525.10:FF:000003">
    <property type="entry name" value="kalirin isoform X2"/>
    <property type="match status" value="1"/>
</dbReference>
<dbReference type="FunFam" id="1.20.58.60:FF:000024">
    <property type="entry name" value="Kalirin RhoGEF kinase a"/>
    <property type="match status" value="1"/>
</dbReference>
<dbReference type="FunFam" id="1.20.58.60:FF:000023">
    <property type="entry name" value="Kalirin RhoGEF kinase b"/>
    <property type="match status" value="1"/>
</dbReference>
<dbReference type="FunFam" id="1.20.58.60:FF:000032">
    <property type="entry name" value="Kalirin RhoGEF kinase b"/>
    <property type="match status" value="1"/>
</dbReference>
<dbReference type="FunFam" id="2.30.29.30:FF:000040">
    <property type="entry name" value="Kalirin RhoGEF kinase b"/>
    <property type="match status" value="1"/>
</dbReference>
<dbReference type="FunFam" id="1.20.900.10:FF:000008">
    <property type="entry name" value="rho guanine nucleotide exchange factor 25"/>
    <property type="match status" value="1"/>
</dbReference>
<dbReference type="FunFam" id="1.20.58.60:FF:000015">
    <property type="entry name" value="triple functional domain protein-like"/>
    <property type="match status" value="1"/>
</dbReference>
<dbReference type="Gene3D" id="1.20.58.60">
    <property type="match status" value="5"/>
</dbReference>
<dbReference type="Gene3D" id="3.40.525.10">
    <property type="entry name" value="CRAL-TRIO lipid binding domain"/>
    <property type="match status" value="1"/>
</dbReference>
<dbReference type="Gene3D" id="1.20.900.10">
    <property type="entry name" value="Dbl homology (DH) domain"/>
    <property type="match status" value="2"/>
</dbReference>
<dbReference type="Gene3D" id="2.60.40.10">
    <property type="entry name" value="Immunoglobulins"/>
    <property type="match status" value="1"/>
</dbReference>
<dbReference type="Gene3D" id="3.30.200.20">
    <property type="entry name" value="Phosphorylase Kinase, domain 1"/>
    <property type="match status" value="1"/>
</dbReference>
<dbReference type="Gene3D" id="2.30.29.30">
    <property type="entry name" value="Pleckstrin-homology domain (PH domain)/Phosphotyrosine-binding domain (PTB)"/>
    <property type="match status" value="2"/>
</dbReference>
<dbReference type="Gene3D" id="2.30.30.40">
    <property type="entry name" value="SH3 Domains"/>
    <property type="match status" value="2"/>
</dbReference>
<dbReference type="Gene3D" id="1.10.510.10">
    <property type="entry name" value="Transferase(Phosphotransferase) domain 1"/>
    <property type="match status" value="1"/>
</dbReference>
<dbReference type="InterPro" id="IPR001251">
    <property type="entry name" value="CRAL-TRIO_dom"/>
</dbReference>
<dbReference type="InterPro" id="IPR036865">
    <property type="entry name" value="CRAL-TRIO_dom_sf"/>
</dbReference>
<dbReference type="InterPro" id="IPR035899">
    <property type="entry name" value="DBL_dom_sf"/>
</dbReference>
<dbReference type="InterPro" id="IPR000219">
    <property type="entry name" value="DH_dom"/>
</dbReference>
<dbReference type="InterPro" id="IPR007110">
    <property type="entry name" value="Ig-like_dom"/>
</dbReference>
<dbReference type="InterPro" id="IPR036179">
    <property type="entry name" value="Ig-like_dom_sf"/>
</dbReference>
<dbReference type="InterPro" id="IPR013783">
    <property type="entry name" value="Ig-like_fold"/>
</dbReference>
<dbReference type="InterPro" id="IPR013098">
    <property type="entry name" value="Ig_I-set"/>
</dbReference>
<dbReference type="InterPro" id="IPR003599">
    <property type="entry name" value="Ig_sub"/>
</dbReference>
<dbReference type="InterPro" id="IPR003598">
    <property type="entry name" value="Ig_sub2"/>
</dbReference>
<dbReference type="InterPro" id="IPR047054">
    <property type="entry name" value="Kalirin_TRIO_PH_1"/>
</dbReference>
<dbReference type="InterPro" id="IPR028570">
    <property type="entry name" value="Kalirin_TRIO_SH3_1"/>
</dbReference>
<dbReference type="InterPro" id="IPR047053">
    <property type="entry name" value="Kalirin_TRIO_SH3_2"/>
</dbReference>
<dbReference type="InterPro" id="IPR011009">
    <property type="entry name" value="Kinase-like_dom_sf"/>
</dbReference>
<dbReference type="InterPro" id="IPR011993">
    <property type="entry name" value="PH-like_dom_sf"/>
</dbReference>
<dbReference type="InterPro" id="IPR001849">
    <property type="entry name" value="PH_domain"/>
</dbReference>
<dbReference type="InterPro" id="IPR000719">
    <property type="entry name" value="Prot_kinase_dom"/>
</dbReference>
<dbReference type="InterPro" id="IPR017441">
    <property type="entry name" value="Protein_kinase_ATP_BS"/>
</dbReference>
<dbReference type="InterPro" id="IPR051336">
    <property type="entry name" value="RhoGEF_Guanine_NuclExch_SF"/>
</dbReference>
<dbReference type="InterPro" id="IPR008271">
    <property type="entry name" value="Ser/Thr_kinase_AS"/>
</dbReference>
<dbReference type="InterPro" id="IPR036028">
    <property type="entry name" value="SH3-like_dom_sf"/>
</dbReference>
<dbReference type="InterPro" id="IPR001452">
    <property type="entry name" value="SH3_domain"/>
</dbReference>
<dbReference type="InterPro" id="IPR055251">
    <property type="entry name" value="SOS1_NGEF_PH"/>
</dbReference>
<dbReference type="InterPro" id="IPR018159">
    <property type="entry name" value="Spectrin/alpha-actinin"/>
</dbReference>
<dbReference type="InterPro" id="IPR002017">
    <property type="entry name" value="Spectrin_repeat"/>
</dbReference>
<dbReference type="PANTHER" id="PTHR22826">
    <property type="entry name" value="RHO GUANINE EXCHANGE FACTOR-RELATED"/>
    <property type="match status" value="1"/>
</dbReference>
<dbReference type="PANTHER" id="PTHR22826:SF106">
    <property type="entry name" value="TRIO, ISOFORM A"/>
    <property type="match status" value="1"/>
</dbReference>
<dbReference type="Pfam" id="PF13716">
    <property type="entry name" value="CRAL_TRIO_2"/>
    <property type="match status" value="1"/>
</dbReference>
<dbReference type="Pfam" id="PF07679">
    <property type="entry name" value="I-set"/>
    <property type="match status" value="1"/>
</dbReference>
<dbReference type="Pfam" id="PF00069">
    <property type="entry name" value="Pkinase"/>
    <property type="match status" value="1"/>
</dbReference>
<dbReference type="Pfam" id="PF00621">
    <property type="entry name" value="RhoGEF"/>
    <property type="match status" value="2"/>
</dbReference>
<dbReference type="Pfam" id="PF16609">
    <property type="entry name" value="SH3-RhoG_link"/>
    <property type="match status" value="1"/>
</dbReference>
<dbReference type="Pfam" id="PF00018">
    <property type="entry name" value="SH3_1"/>
    <property type="match status" value="1"/>
</dbReference>
<dbReference type="Pfam" id="PF23587">
    <property type="entry name" value="SH3_KALRN"/>
    <property type="match status" value="1"/>
</dbReference>
<dbReference type="Pfam" id="PF22697">
    <property type="entry name" value="SOS1_NGEF_PH"/>
    <property type="match status" value="2"/>
</dbReference>
<dbReference type="Pfam" id="PF00435">
    <property type="entry name" value="Spectrin"/>
    <property type="match status" value="4"/>
</dbReference>
<dbReference type="Pfam" id="PF23323">
    <property type="entry name" value="Spectrin_6"/>
    <property type="match status" value="1"/>
</dbReference>
<dbReference type="SMART" id="SM00409">
    <property type="entry name" value="IG"/>
    <property type="match status" value="1"/>
</dbReference>
<dbReference type="SMART" id="SM00408">
    <property type="entry name" value="IGc2"/>
    <property type="match status" value="1"/>
</dbReference>
<dbReference type="SMART" id="SM00233">
    <property type="entry name" value="PH"/>
    <property type="match status" value="2"/>
</dbReference>
<dbReference type="SMART" id="SM00325">
    <property type="entry name" value="RhoGEF"/>
    <property type="match status" value="2"/>
</dbReference>
<dbReference type="SMART" id="SM00220">
    <property type="entry name" value="S_TKc"/>
    <property type="match status" value="1"/>
</dbReference>
<dbReference type="SMART" id="SM00516">
    <property type="entry name" value="SEC14"/>
    <property type="match status" value="1"/>
</dbReference>
<dbReference type="SMART" id="SM00326">
    <property type="entry name" value="SH3"/>
    <property type="match status" value="2"/>
</dbReference>
<dbReference type="SMART" id="SM00150">
    <property type="entry name" value="SPEC"/>
    <property type="match status" value="7"/>
</dbReference>
<dbReference type="SUPFAM" id="SSF52087">
    <property type="entry name" value="CRAL/TRIO domain"/>
    <property type="match status" value="1"/>
</dbReference>
<dbReference type="SUPFAM" id="SSF48065">
    <property type="entry name" value="DBL homology domain (DH-domain)"/>
    <property type="match status" value="2"/>
</dbReference>
<dbReference type="SUPFAM" id="SSF48726">
    <property type="entry name" value="Immunoglobulin"/>
    <property type="match status" value="1"/>
</dbReference>
<dbReference type="SUPFAM" id="SSF50729">
    <property type="entry name" value="PH domain-like"/>
    <property type="match status" value="2"/>
</dbReference>
<dbReference type="SUPFAM" id="SSF56112">
    <property type="entry name" value="Protein kinase-like (PK-like)"/>
    <property type="match status" value="1"/>
</dbReference>
<dbReference type="SUPFAM" id="SSF50044">
    <property type="entry name" value="SH3-domain"/>
    <property type="match status" value="2"/>
</dbReference>
<dbReference type="SUPFAM" id="SSF46966">
    <property type="entry name" value="Spectrin repeat"/>
    <property type="match status" value="6"/>
</dbReference>
<dbReference type="PROSITE" id="PS50191">
    <property type="entry name" value="CRAL_TRIO"/>
    <property type="match status" value="1"/>
</dbReference>
<dbReference type="PROSITE" id="PS50010">
    <property type="entry name" value="DH_2"/>
    <property type="match status" value="2"/>
</dbReference>
<dbReference type="PROSITE" id="PS50835">
    <property type="entry name" value="IG_LIKE"/>
    <property type="match status" value="1"/>
</dbReference>
<dbReference type="PROSITE" id="PS50003">
    <property type="entry name" value="PH_DOMAIN"/>
    <property type="match status" value="2"/>
</dbReference>
<dbReference type="PROSITE" id="PS00107">
    <property type="entry name" value="PROTEIN_KINASE_ATP"/>
    <property type="match status" value="1"/>
</dbReference>
<dbReference type="PROSITE" id="PS50011">
    <property type="entry name" value="PROTEIN_KINASE_DOM"/>
    <property type="match status" value="1"/>
</dbReference>
<dbReference type="PROSITE" id="PS00108">
    <property type="entry name" value="PROTEIN_KINASE_ST"/>
    <property type="match status" value="1"/>
</dbReference>
<dbReference type="PROSITE" id="PS50002">
    <property type="entry name" value="SH3"/>
    <property type="match status" value="2"/>
</dbReference>
<name>TRIO_DANRE</name>
<organism>
    <name type="scientific">Danio rerio</name>
    <name type="common">Zebrafish</name>
    <name type="synonym">Brachydanio rerio</name>
    <dbReference type="NCBI Taxonomy" id="7955"/>
    <lineage>
        <taxon>Eukaryota</taxon>
        <taxon>Metazoa</taxon>
        <taxon>Chordata</taxon>
        <taxon>Craniata</taxon>
        <taxon>Vertebrata</taxon>
        <taxon>Euteleostomi</taxon>
        <taxon>Actinopterygii</taxon>
        <taxon>Neopterygii</taxon>
        <taxon>Teleostei</taxon>
        <taxon>Ostariophysi</taxon>
        <taxon>Cypriniformes</taxon>
        <taxon>Danionidae</taxon>
        <taxon>Danioninae</taxon>
        <taxon>Danio</taxon>
    </lineage>
</organism>
<gene>
    <name type="primary">trio</name>
    <name type="ORF">si:dkey-158b13.2</name>
</gene>
<protein>
    <recommendedName>
        <fullName>Triple functional domain protein</fullName>
        <ecNumber>2.7.11.1</ecNumber>
    </recommendedName>
</protein>
<reference key="1">
    <citation type="journal article" date="2013" name="Nature">
        <title>The zebrafish reference genome sequence and its relationship to the human genome.</title>
        <authorList>
            <person name="Howe K."/>
            <person name="Clark M.D."/>
            <person name="Torroja C.F."/>
            <person name="Torrance J."/>
            <person name="Berthelot C."/>
            <person name="Muffato M."/>
            <person name="Collins J.E."/>
            <person name="Humphray S."/>
            <person name="McLaren K."/>
            <person name="Matthews L."/>
            <person name="McLaren S."/>
            <person name="Sealy I."/>
            <person name="Caccamo M."/>
            <person name="Churcher C."/>
            <person name="Scott C."/>
            <person name="Barrett J.C."/>
            <person name="Koch R."/>
            <person name="Rauch G.J."/>
            <person name="White S."/>
            <person name="Chow W."/>
            <person name="Kilian B."/>
            <person name="Quintais L.T."/>
            <person name="Guerra-Assuncao J.A."/>
            <person name="Zhou Y."/>
            <person name="Gu Y."/>
            <person name="Yen J."/>
            <person name="Vogel J.H."/>
            <person name="Eyre T."/>
            <person name="Redmond S."/>
            <person name="Banerjee R."/>
            <person name="Chi J."/>
            <person name="Fu B."/>
            <person name="Langley E."/>
            <person name="Maguire S.F."/>
            <person name="Laird G.K."/>
            <person name="Lloyd D."/>
            <person name="Kenyon E."/>
            <person name="Donaldson S."/>
            <person name="Sehra H."/>
            <person name="Almeida-King J."/>
            <person name="Loveland J."/>
            <person name="Trevanion S."/>
            <person name="Jones M."/>
            <person name="Quail M."/>
            <person name="Willey D."/>
            <person name="Hunt A."/>
            <person name="Burton J."/>
            <person name="Sims S."/>
            <person name="McLay K."/>
            <person name="Plumb B."/>
            <person name="Davis J."/>
            <person name="Clee C."/>
            <person name="Oliver K."/>
            <person name="Clark R."/>
            <person name="Riddle C."/>
            <person name="Elliot D."/>
            <person name="Threadgold G."/>
            <person name="Harden G."/>
            <person name="Ware D."/>
            <person name="Begum S."/>
            <person name="Mortimore B."/>
            <person name="Kerry G."/>
            <person name="Heath P."/>
            <person name="Phillimore B."/>
            <person name="Tracey A."/>
            <person name="Corby N."/>
            <person name="Dunn M."/>
            <person name="Johnson C."/>
            <person name="Wood J."/>
            <person name="Clark S."/>
            <person name="Pelan S."/>
            <person name="Griffiths G."/>
            <person name="Smith M."/>
            <person name="Glithero R."/>
            <person name="Howden P."/>
            <person name="Barker N."/>
            <person name="Lloyd C."/>
            <person name="Stevens C."/>
            <person name="Harley J."/>
            <person name="Holt K."/>
            <person name="Panagiotidis G."/>
            <person name="Lovell J."/>
            <person name="Beasley H."/>
            <person name="Henderson C."/>
            <person name="Gordon D."/>
            <person name="Auger K."/>
            <person name="Wright D."/>
            <person name="Collins J."/>
            <person name="Raisen C."/>
            <person name="Dyer L."/>
            <person name="Leung K."/>
            <person name="Robertson L."/>
            <person name="Ambridge K."/>
            <person name="Leongamornlert D."/>
            <person name="McGuire S."/>
            <person name="Gilderthorp R."/>
            <person name="Griffiths C."/>
            <person name="Manthravadi D."/>
            <person name="Nichol S."/>
            <person name="Barker G."/>
            <person name="Whitehead S."/>
            <person name="Kay M."/>
            <person name="Brown J."/>
            <person name="Murnane C."/>
            <person name="Gray E."/>
            <person name="Humphries M."/>
            <person name="Sycamore N."/>
            <person name="Barker D."/>
            <person name="Saunders D."/>
            <person name="Wallis J."/>
            <person name="Babbage A."/>
            <person name="Hammond S."/>
            <person name="Mashreghi-Mohammadi M."/>
            <person name="Barr L."/>
            <person name="Martin S."/>
            <person name="Wray P."/>
            <person name="Ellington A."/>
            <person name="Matthews N."/>
            <person name="Ellwood M."/>
            <person name="Woodmansey R."/>
            <person name="Clark G."/>
            <person name="Cooper J."/>
            <person name="Tromans A."/>
            <person name="Grafham D."/>
            <person name="Skuce C."/>
            <person name="Pandian R."/>
            <person name="Andrews R."/>
            <person name="Harrison E."/>
            <person name="Kimberley A."/>
            <person name="Garnett J."/>
            <person name="Fosker N."/>
            <person name="Hall R."/>
            <person name="Garner P."/>
            <person name="Kelly D."/>
            <person name="Bird C."/>
            <person name="Palmer S."/>
            <person name="Gehring I."/>
            <person name="Berger A."/>
            <person name="Dooley C.M."/>
            <person name="Ersan-Urun Z."/>
            <person name="Eser C."/>
            <person name="Geiger H."/>
            <person name="Geisler M."/>
            <person name="Karotki L."/>
            <person name="Kirn A."/>
            <person name="Konantz J."/>
            <person name="Konantz M."/>
            <person name="Oberlander M."/>
            <person name="Rudolph-Geiger S."/>
            <person name="Teucke M."/>
            <person name="Lanz C."/>
            <person name="Raddatz G."/>
            <person name="Osoegawa K."/>
            <person name="Zhu B."/>
            <person name="Rapp A."/>
            <person name="Widaa S."/>
            <person name="Langford C."/>
            <person name="Yang F."/>
            <person name="Schuster S.C."/>
            <person name="Carter N.P."/>
            <person name="Harrow J."/>
            <person name="Ning Z."/>
            <person name="Herrero J."/>
            <person name="Searle S.M."/>
            <person name="Enright A."/>
            <person name="Geisler R."/>
            <person name="Plasterk R.H."/>
            <person name="Lee C."/>
            <person name="Westerfield M."/>
            <person name="de Jong P.J."/>
            <person name="Zon L.I."/>
            <person name="Postlethwait J.H."/>
            <person name="Nusslein-Volhard C."/>
            <person name="Hubbard T.J."/>
            <person name="Roest Crollius H."/>
            <person name="Rogers J."/>
            <person name="Stemple D.L."/>
        </authorList>
    </citation>
    <scope>NUCLEOTIDE SEQUENCE [LARGE SCALE GENOMIC DNA]</scope>
    <source>
        <strain>Tuebingen</strain>
    </source>
</reference>
<sequence>MKAMEVLPILKEKVAFLSGGRDKRGGPVLTFPSRTNHDRIRHEDLRRLIAYLAGIPSEDVCKHGFTVIVDMRGSKWDSIKPLLKILQESFPCCIHIALIIKPDNFWQKQRTNFGSSKFEFETTMVSLEGLSKVVDPSQLTADFEGSLDYNHEEWIEIRVAFEDFTGNARHLLARLEEMHETVTRKDLPQDLDGARRMIEEHAALKKRVIKAPVEEVDNEGQRLLQRIQSSESYANRTVPVPPGQREGQGQPNADTQGLVPRITALLEKLHSTRQNLHQSWHIRKLQLDQCFQLRLFEQDAEKMFDWIMHNKGLFLAGYTEIGNNHPHAMELQTQHNHFAMNCMNVYVNINRIMSVGNRLLEAGHYASQQIKQISGQLEQEWKAFAAALDERSALLEMSATFHQKCDQYMSNVDSWCKACGEVDLPSELQELEDAIHHHQGLYEHITAAYSEVSQDGKALLDKLQRPLTPGSADSLTASANYTKAVNHVLDIIHEVLHHQRQLENIWQHRKVRLHQRLQLCVFQQDVQQVLDWIENHGEAFLSKHTGVGKSLHRARALQKRHEDFEEVAQNTYTNADKLLEAAEQLAQTGECDPEEIYQAAHQLEDRIQDFVRRVEQRKVLLDMSVAFHTHVKELWTWLEELQKELLDDVYAESVEAVQDLIKRFGQQQQTTLQFTVNVIKEGEDLIQQLRDLAISSNKTPHNSSINHIESVLQQLDEAQAQMEELFQERKIKLELFLQLRIFERDAIDIISDLDSWNEELSQQMNEFDTEDLTLAEQRLQHHADKALTMNNLAFHVIHQGQELLQYVNEVQASGVELLCDRDVDMATRVQDLLEFLHEKQQELDVAAEQHRRHLEQCVQLRHLQAEVKQVLGWIRNGESMLNAGLITASSLQEAEQLQREHEQFQHAIEKTHQSALQVQQKAEALLQANHYDMDMIRDCAENVASHWQQLMLKMEDRLKLVNASVAFYKTSEQVCSVLESLEQEYKREEDWCGGADKLGPNCESDHVTPMISKHLEQKEAFLKACTLARRNADVFLKYMHRNSVSMPGMLSHVKAPEQQVKNILNELLQRENRVLHFWTMRKRRLDQCQQYVVFERSAKQALEWIHDTGEFYLSTHTSTGSSIHHTQELLKEHEDFHITAKQTKERVKLLIQLADGFCDKGHSHAAEIKKWVTAVDKRYRDFSLRMDKYRTSLEKALGISSDSNKASKDLQLDIIPASAPGSEVKLRDAAHELNEEKRKSARRKDFIMAELIQTEKAYVRDLRECMDTYLWEMTSGVEEIPPGIVNKEHIIFGNMQDLYEFHHNIFLKELEKYEQLPEDVGHCFVTWADKFQMYVNYCKNKPDSTQLILEHAGGYFDEIQQRHRLANSISSYLIKPVQRITKYQLLLKELLTCCEEGKGEIKDGLEVMLSVPKRANDAMHLSMLEGFDENIESQGELILQEAFQVWDPKTLIRKGRERHLFLFEMSLIFSKEVKDSNGRSKYIYKSKLFTSELGVTEHVEGDPCKFALWVGRTPTSDNKIVLKASGIENKQDWIKHIREVIQERTVHLKGALKEPIHIPKASTAKHKGRRDGEDLDSQGDGSSQPDTISLASRTSQNTLDSDKLSGGCELTVVIHDFMAGNSNELTIRRGQTVEVLERLHDKPDWCLVRTTDRSPALEGLVPCAMLCIAHSRSSMEMEGIFNHKDALSVCSNDAIMPGSSATLQPGHVMGSQSSPGPKRPGNTLRKWLTSPVRRLSSGKADGHVKKLAHKHKKSRDVRKSADAGSQKDSDDSAATPQDETLEERVRNEGLSSGTLSKSSSSGMQSCGEEEGEEGADAVPLPPPMAIQQHSLLQPDAQDDKTSSRLSVRPSSSETPSAAELVSAIEELVKSKMALEDRPSTLSVEQGDSSSPSFNPSDNSLLSSSSPIDEIEERKTGFFKKRHYVLLELIETERDYVRDLSLVVEGYMARMREDGVPDDMKGKDKIVFGNIQQIYDWHKDFFLGELEKCLEDPDRLGPLFLKHERRLHMYIVYCQNKPKSEHIVSEYIDTYFEDLKQRLGHRLQITDLLIKPVQRIMKYQLLLKDFLKFSKKIGTDSIELEKAVEVMCIVPKRCNDMMNVGRLQGFDGKIVAQGRLLLQDTFMVAEPEGGLLNRMKERRVFLFEQIVIFSEPLDKKRGFSMPGYLYKYSIKVNCLGLEDSVDGDPCKFALTSRTSNSSKDAFILHSSHPGVRQVWMLQISQILESQRNFLNALTSPIDYQRNHVEGPGVSGSGVQAGGSGGQMMAPGGGVGVPAGPGSRSRPSRIPQPSRLPQPLRHHSPALGPGAHEHDGPDKLSGMSPRPLSRGPSPSCTTEPEPKVKLPASPHPKQTDSQQTESPAKEIPRATVAPLALVKPRPGTVSPMASPLATPAFKDSIPPCSPGPKTGSSSFWSSVPASPASRPASFTFPGDACDTLSRPNHNQSQRHSTHSKDADRMSTCSSTSEQSIQSTQSNGSESSSSSNISTMLVTQDYVALKEDEINVGQGEVVQILASNQQNMFLVFRAATEQCPAAEGWIPGYVLGHTSAIIPDAPDGTIKKSSSSWHTSLRIRKKSEKREKDNKKEAKLENGYRKSREGLTNKVSVKLLNPNYIYDVLPEFLVPLSDVTCDKGECVTLRCKVCGRPKATVTWKGPEQKTLTNNGHFSIAYSETGEATLRIVGVTSEDDGSYTCIATNDIGSVASSASLRVLGTTSDGIRVMWKDNFESFYTEVAELGRGRFSVVKRCDQRGSKRTVAVKFVNKKLMKRDQVTHEFSVLQRLQHPHLVRLLDTFETSSSYALVLEMSDQGRLLDYIVSWGNLTEEKVAFYLRDILEALQYLHNCRIVHLDLKPENLVVEQSPSQPLVKLTDFGDAVQLNSTPYVHPLLGSPEFAAPELVLGDPVSLSSDLWSLGVLTYVMLSGASPFLDESVEETCLNICRLDFSFPDDYFQGVSQAARDFMCLLLRMEPSKRPPATSCLQEPWLRAGGGRRSAECIDTSRLISFIDRRKHQNDLRPLTGIRAFLQTRLQPRI</sequence>
<keyword id="KW-0067">ATP-binding</keyword>
<keyword id="KW-0963">Cytoplasm</keyword>
<keyword id="KW-1015">Disulfide bond</keyword>
<keyword id="KW-0344">Guanine-nucleotide releasing factor</keyword>
<keyword id="KW-0393">Immunoglobulin domain</keyword>
<keyword id="KW-0418">Kinase</keyword>
<keyword id="KW-0547">Nucleotide-binding</keyword>
<keyword id="KW-0597">Phosphoprotein</keyword>
<keyword id="KW-1185">Reference proteome</keyword>
<keyword id="KW-0677">Repeat</keyword>
<keyword id="KW-0723">Serine/threonine-protein kinase</keyword>
<keyword id="KW-0728">SH3 domain</keyword>
<keyword id="KW-0808">Transferase</keyword>
<comment type="function">
    <text evidence="1">Promotes the exchange of GDP by GTP. Together with leukocyte antigen-related (LAR) protein, it could play a role in coordinating cell-matrix and cytoskeletal rearrangements necessary for cell migration and cell growth (By similarity).</text>
</comment>
<comment type="catalytic activity">
    <reaction>
        <text>L-seryl-[protein] + ATP = O-phospho-L-seryl-[protein] + ADP + H(+)</text>
        <dbReference type="Rhea" id="RHEA:17989"/>
        <dbReference type="Rhea" id="RHEA-COMP:9863"/>
        <dbReference type="Rhea" id="RHEA-COMP:11604"/>
        <dbReference type="ChEBI" id="CHEBI:15378"/>
        <dbReference type="ChEBI" id="CHEBI:29999"/>
        <dbReference type="ChEBI" id="CHEBI:30616"/>
        <dbReference type="ChEBI" id="CHEBI:83421"/>
        <dbReference type="ChEBI" id="CHEBI:456216"/>
        <dbReference type="EC" id="2.7.11.1"/>
    </reaction>
</comment>
<comment type="catalytic activity">
    <reaction>
        <text>L-threonyl-[protein] + ATP = O-phospho-L-threonyl-[protein] + ADP + H(+)</text>
        <dbReference type="Rhea" id="RHEA:46608"/>
        <dbReference type="Rhea" id="RHEA-COMP:11060"/>
        <dbReference type="Rhea" id="RHEA-COMP:11605"/>
        <dbReference type="ChEBI" id="CHEBI:15378"/>
        <dbReference type="ChEBI" id="CHEBI:30013"/>
        <dbReference type="ChEBI" id="CHEBI:30616"/>
        <dbReference type="ChEBI" id="CHEBI:61977"/>
        <dbReference type="ChEBI" id="CHEBI:456216"/>
        <dbReference type="EC" id="2.7.11.1"/>
    </reaction>
</comment>
<comment type="subcellular location">
    <subcellularLocation>
        <location evidence="1">Cytoplasm</location>
    </subcellularLocation>
</comment>
<comment type="domain">
    <text evidence="1">The N-terminal DBL/GEF domain specifically catalyzes nucleotide exchange for RAC1, leading to the activation of Jun kinase and the production of membrane ruffles. The second DBL/GEF domain is an exchange factor for rhoa and induces the formation of stress fibers (By similarity).</text>
</comment>
<comment type="PTM">
    <text evidence="1">Phosphorylated on serine residue(s).</text>
</comment>
<comment type="similarity">
    <text evidence="10">Belongs to the protein kinase superfamily. CAMK Ser/Thr protein kinase family.</text>
</comment>